<organism>
    <name type="scientific">Borrelia garinii subsp. bavariensis (strain ATCC BAA-2496 / DSM 23469 / PBi)</name>
    <name type="common">Borreliella bavariensis</name>
    <dbReference type="NCBI Taxonomy" id="290434"/>
    <lineage>
        <taxon>Bacteria</taxon>
        <taxon>Pseudomonadati</taxon>
        <taxon>Spirochaetota</taxon>
        <taxon>Spirochaetia</taxon>
        <taxon>Spirochaetales</taxon>
        <taxon>Borreliaceae</taxon>
        <taxon>Borreliella</taxon>
    </lineage>
</organism>
<evidence type="ECO:0000255" key="1">
    <source>
        <dbReference type="HAMAP-Rule" id="MF_01151"/>
    </source>
</evidence>
<evidence type="ECO:0000256" key="2">
    <source>
        <dbReference type="SAM" id="MobiDB-lite"/>
    </source>
</evidence>
<name>GRPE_BORGP</name>
<protein>
    <recommendedName>
        <fullName evidence="1">Protein GrpE</fullName>
    </recommendedName>
    <alternativeName>
        <fullName evidence="1">HSP-70 cofactor</fullName>
    </alternativeName>
</protein>
<comment type="function">
    <text evidence="1">Participates actively in the response to hyperosmotic and heat shock by preventing the aggregation of stress-denatured proteins, in association with DnaK and GrpE. It is the nucleotide exchange factor for DnaK and may function as a thermosensor. Unfolded proteins bind initially to DnaJ; upon interaction with the DnaJ-bound protein, DnaK hydrolyzes its bound ATP, resulting in the formation of a stable complex. GrpE releases ADP from DnaK; ATP binding to DnaK triggers the release of the substrate protein, thus completing the reaction cycle. Several rounds of ATP-dependent interactions between DnaJ, DnaK and GrpE are required for fully efficient folding.</text>
</comment>
<comment type="subunit">
    <text evidence="1">Homodimer.</text>
</comment>
<comment type="subcellular location">
    <subcellularLocation>
        <location evidence="1">Cytoplasm</location>
    </subcellularLocation>
</comment>
<comment type="similarity">
    <text evidence="1">Belongs to the GrpE family.</text>
</comment>
<reference key="1">
    <citation type="journal article" date="2004" name="Nucleic Acids Res.">
        <title>Comparative analysis of the Borrelia garinii genome.</title>
        <authorList>
            <person name="Gloeckner G."/>
            <person name="Lehmann R."/>
            <person name="Romualdi A."/>
            <person name="Pradella S."/>
            <person name="Schulte-Spechtel U."/>
            <person name="Schilhabel M."/>
            <person name="Wilske B."/>
            <person name="Suehnel J."/>
            <person name="Platzer M."/>
        </authorList>
    </citation>
    <scope>NUCLEOTIDE SEQUENCE [LARGE SCALE GENOMIC DNA]</scope>
    <source>
        <strain>ATCC BAA-2496 / DSM 23469 / PBi</strain>
    </source>
</reference>
<accession>Q661A2</accession>
<feature type="chain" id="PRO_1000053547" description="Protein GrpE">
    <location>
        <begin position="1"/>
        <end position="187"/>
    </location>
</feature>
<feature type="region of interest" description="Disordered" evidence="2">
    <location>
        <begin position="1"/>
        <end position="31"/>
    </location>
</feature>
<gene>
    <name evidence="1" type="primary">grpE</name>
    <name type="ordered locus">BG0530</name>
</gene>
<sequence length="187" mass="22038">MEKKETKNDAEKNNKQDNKSTKSQKKENLNLVNSDKKITELENEISNLKDLYLRKQAEFENFRKRLEKEKDNFVKFANETIMKDVVNFLDNLERAINSSRKSKDFDNLLTGISMIENEILSIFDKKYNLKKFGENGENFDPSRHEAISIEEKEDLKNPEIVEVYQKGYCYNDRILRTAKVKVAQSKN</sequence>
<keyword id="KW-0143">Chaperone</keyword>
<keyword id="KW-0963">Cytoplasm</keyword>
<keyword id="KW-0346">Stress response</keyword>
<dbReference type="EMBL" id="CP000013">
    <property type="protein sequence ID" value="AAU07369.1"/>
    <property type="molecule type" value="Genomic_DNA"/>
</dbReference>
<dbReference type="RefSeq" id="WP_011193831.1">
    <property type="nucleotide sequence ID" value="NZ_CP028872.1"/>
</dbReference>
<dbReference type="SMR" id="Q661A2"/>
<dbReference type="GeneID" id="45161312"/>
<dbReference type="KEGG" id="bga:BG0530"/>
<dbReference type="eggNOG" id="COG0576">
    <property type="taxonomic scope" value="Bacteria"/>
</dbReference>
<dbReference type="HOGENOM" id="CLU_057217_6_3_12"/>
<dbReference type="OrthoDB" id="9812586at2"/>
<dbReference type="Proteomes" id="UP000002276">
    <property type="component" value="Chromosome"/>
</dbReference>
<dbReference type="GO" id="GO:0005737">
    <property type="term" value="C:cytoplasm"/>
    <property type="evidence" value="ECO:0007669"/>
    <property type="project" value="UniProtKB-SubCell"/>
</dbReference>
<dbReference type="GO" id="GO:0000774">
    <property type="term" value="F:adenyl-nucleotide exchange factor activity"/>
    <property type="evidence" value="ECO:0007669"/>
    <property type="project" value="InterPro"/>
</dbReference>
<dbReference type="GO" id="GO:0042803">
    <property type="term" value="F:protein homodimerization activity"/>
    <property type="evidence" value="ECO:0007669"/>
    <property type="project" value="InterPro"/>
</dbReference>
<dbReference type="GO" id="GO:0051087">
    <property type="term" value="F:protein-folding chaperone binding"/>
    <property type="evidence" value="ECO:0007669"/>
    <property type="project" value="InterPro"/>
</dbReference>
<dbReference type="GO" id="GO:0051082">
    <property type="term" value="F:unfolded protein binding"/>
    <property type="evidence" value="ECO:0007669"/>
    <property type="project" value="TreeGrafter"/>
</dbReference>
<dbReference type="GO" id="GO:0006457">
    <property type="term" value="P:protein folding"/>
    <property type="evidence" value="ECO:0007669"/>
    <property type="project" value="InterPro"/>
</dbReference>
<dbReference type="CDD" id="cd00446">
    <property type="entry name" value="GrpE"/>
    <property type="match status" value="1"/>
</dbReference>
<dbReference type="FunFam" id="2.30.22.10:FF:000001">
    <property type="entry name" value="Protein GrpE"/>
    <property type="match status" value="1"/>
</dbReference>
<dbReference type="FunFam" id="3.90.20.20:FF:000022">
    <property type="entry name" value="Protein GrpE"/>
    <property type="match status" value="1"/>
</dbReference>
<dbReference type="Gene3D" id="3.90.20.20">
    <property type="match status" value="1"/>
</dbReference>
<dbReference type="Gene3D" id="2.30.22.10">
    <property type="entry name" value="Head domain of nucleotide exchange factor GrpE"/>
    <property type="match status" value="1"/>
</dbReference>
<dbReference type="HAMAP" id="MF_01151">
    <property type="entry name" value="GrpE"/>
    <property type="match status" value="1"/>
</dbReference>
<dbReference type="InterPro" id="IPR000740">
    <property type="entry name" value="GrpE"/>
</dbReference>
<dbReference type="InterPro" id="IPR013805">
    <property type="entry name" value="GrpE_coiled_coil"/>
</dbReference>
<dbReference type="InterPro" id="IPR009012">
    <property type="entry name" value="GrpE_head"/>
</dbReference>
<dbReference type="NCBIfam" id="NF010738">
    <property type="entry name" value="PRK14140.1"/>
    <property type="match status" value="1"/>
</dbReference>
<dbReference type="PANTHER" id="PTHR21237">
    <property type="entry name" value="GRPE PROTEIN"/>
    <property type="match status" value="1"/>
</dbReference>
<dbReference type="PANTHER" id="PTHR21237:SF23">
    <property type="entry name" value="GRPE PROTEIN HOMOLOG, MITOCHONDRIAL"/>
    <property type="match status" value="1"/>
</dbReference>
<dbReference type="Pfam" id="PF01025">
    <property type="entry name" value="GrpE"/>
    <property type="match status" value="1"/>
</dbReference>
<dbReference type="PRINTS" id="PR00773">
    <property type="entry name" value="GRPEPROTEIN"/>
</dbReference>
<dbReference type="SUPFAM" id="SSF58014">
    <property type="entry name" value="Coiled-coil domain of nucleotide exchange factor GrpE"/>
    <property type="match status" value="1"/>
</dbReference>
<dbReference type="SUPFAM" id="SSF51064">
    <property type="entry name" value="Head domain of nucleotide exchange factor GrpE"/>
    <property type="match status" value="1"/>
</dbReference>
<dbReference type="PROSITE" id="PS01071">
    <property type="entry name" value="GRPE"/>
    <property type="match status" value="1"/>
</dbReference>
<proteinExistence type="inferred from homology"/>